<reference key="1">
    <citation type="journal article" date="1993" name="Mol. Microbiol.">
        <title>Isolation and characterization of the secE homologue gene of Bacillus subtilis.</title>
        <authorList>
            <person name="Jeong S."/>
            <person name="Yoshikawa H."/>
            <person name="Takahashi H."/>
        </authorList>
    </citation>
    <scope>NUCLEOTIDE SEQUENCE [GENOMIC DNA]</scope>
</reference>
<reference key="2">
    <citation type="journal article" date="1997" name="Nature">
        <title>The complete genome sequence of the Gram-positive bacterium Bacillus subtilis.</title>
        <authorList>
            <person name="Kunst F."/>
            <person name="Ogasawara N."/>
            <person name="Moszer I."/>
            <person name="Albertini A.M."/>
            <person name="Alloni G."/>
            <person name="Azevedo V."/>
            <person name="Bertero M.G."/>
            <person name="Bessieres P."/>
            <person name="Bolotin A."/>
            <person name="Borchert S."/>
            <person name="Borriss R."/>
            <person name="Boursier L."/>
            <person name="Brans A."/>
            <person name="Braun M."/>
            <person name="Brignell S.C."/>
            <person name="Bron S."/>
            <person name="Brouillet S."/>
            <person name="Bruschi C.V."/>
            <person name="Caldwell B."/>
            <person name="Capuano V."/>
            <person name="Carter N.M."/>
            <person name="Choi S.-K."/>
            <person name="Codani J.-J."/>
            <person name="Connerton I.F."/>
            <person name="Cummings N.J."/>
            <person name="Daniel R.A."/>
            <person name="Denizot F."/>
            <person name="Devine K.M."/>
            <person name="Duesterhoeft A."/>
            <person name="Ehrlich S.D."/>
            <person name="Emmerson P.T."/>
            <person name="Entian K.-D."/>
            <person name="Errington J."/>
            <person name="Fabret C."/>
            <person name="Ferrari E."/>
            <person name="Foulger D."/>
            <person name="Fritz C."/>
            <person name="Fujita M."/>
            <person name="Fujita Y."/>
            <person name="Fuma S."/>
            <person name="Galizzi A."/>
            <person name="Galleron N."/>
            <person name="Ghim S.-Y."/>
            <person name="Glaser P."/>
            <person name="Goffeau A."/>
            <person name="Golightly E.J."/>
            <person name="Grandi G."/>
            <person name="Guiseppi G."/>
            <person name="Guy B.J."/>
            <person name="Haga K."/>
            <person name="Haiech J."/>
            <person name="Harwood C.R."/>
            <person name="Henaut A."/>
            <person name="Hilbert H."/>
            <person name="Holsappel S."/>
            <person name="Hosono S."/>
            <person name="Hullo M.-F."/>
            <person name="Itaya M."/>
            <person name="Jones L.-M."/>
            <person name="Joris B."/>
            <person name="Karamata D."/>
            <person name="Kasahara Y."/>
            <person name="Klaerr-Blanchard M."/>
            <person name="Klein C."/>
            <person name="Kobayashi Y."/>
            <person name="Koetter P."/>
            <person name="Koningstein G."/>
            <person name="Krogh S."/>
            <person name="Kumano M."/>
            <person name="Kurita K."/>
            <person name="Lapidus A."/>
            <person name="Lardinois S."/>
            <person name="Lauber J."/>
            <person name="Lazarevic V."/>
            <person name="Lee S.-M."/>
            <person name="Levine A."/>
            <person name="Liu H."/>
            <person name="Masuda S."/>
            <person name="Mauel C."/>
            <person name="Medigue C."/>
            <person name="Medina N."/>
            <person name="Mellado R.P."/>
            <person name="Mizuno M."/>
            <person name="Moestl D."/>
            <person name="Nakai S."/>
            <person name="Noback M."/>
            <person name="Noone D."/>
            <person name="O'Reilly M."/>
            <person name="Ogawa K."/>
            <person name="Ogiwara A."/>
            <person name="Oudega B."/>
            <person name="Park S.-H."/>
            <person name="Parro V."/>
            <person name="Pohl T.M."/>
            <person name="Portetelle D."/>
            <person name="Porwollik S."/>
            <person name="Prescott A.M."/>
            <person name="Presecan E."/>
            <person name="Pujic P."/>
            <person name="Purnelle B."/>
            <person name="Rapoport G."/>
            <person name="Rey M."/>
            <person name="Reynolds S."/>
            <person name="Rieger M."/>
            <person name="Rivolta C."/>
            <person name="Rocha E."/>
            <person name="Roche B."/>
            <person name="Rose M."/>
            <person name="Sadaie Y."/>
            <person name="Sato T."/>
            <person name="Scanlan E."/>
            <person name="Schleich S."/>
            <person name="Schroeter R."/>
            <person name="Scoffone F."/>
            <person name="Sekiguchi J."/>
            <person name="Sekowska A."/>
            <person name="Seror S.J."/>
            <person name="Serror P."/>
            <person name="Shin B.-S."/>
            <person name="Soldo B."/>
            <person name="Sorokin A."/>
            <person name="Tacconi E."/>
            <person name="Takagi T."/>
            <person name="Takahashi H."/>
            <person name="Takemaru K."/>
            <person name="Takeuchi M."/>
            <person name="Tamakoshi A."/>
            <person name="Tanaka T."/>
            <person name="Terpstra P."/>
            <person name="Tognoni A."/>
            <person name="Tosato V."/>
            <person name="Uchiyama S."/>
            <person name="Vandenbol M."/>
            <person name="Vannier F."/>
            <person name="Vassarotti A."/>
            <person name="Viari A."/>
            <person name="Wambutt R."/>
            <person name="Wedler E."/>
            <person name="Wedler H."/>
            <person name="Weitzenegger T."/>
            <person name="Winters P."/>
            <person name="Wipat A."/>
            <person name="Yamamoto H."/>
            <person name="Yamane K."/>
            <person name="Yasumoto K."/>
            <person name="Yata K."/>
            <person name="Yoshida K."/>
            <person name="Yoshikawa H.-F."/>
            <person name="Zumstein E."/>
            <person name="Yoshikawa H."/>
            <person name="Danchin A."/>
        </authorList>
    </citation>
    <scope>NUCLEOTIDE SEQUENCE [LARGE SCALE GENOMIC DNA]</scope>
    <source>
        <strain>168</strain>
    </source>
</reference>
<reference key="3">
    <citation type="journal article" date="2008" name="Proc. Natl. Acad. Sci. U.S.A.">
        <title>Function of the Bacillus subtilis transcription elongation factor NusG in hairpin-dependent RNA polymerase pausing in the trp leader.</title>
        <authorList>
            <person name="Yakhnin A.V."/>
            <person name="Yakhnin H."/>
            <person name="Babitzke P."/>
        </authorList>
    </citation>
    <scope>FUNCTION IN RNA POLYMERASE PAUSING</scope>
</reference>
<reference key="4">
    <citation type="journal article" date="2010" name="Mol. Microbiol.">
        <title>Mechanism of NusG-stimulated pausing, hairpin-dependent pause site selection and intrinsic termination at overlapping pause and termination sites in the Bacillus subtilis trp leader.</title>
        <authorList>
            <person name="Yakhnin A.V."/>
            <person name="Babitzke P."/>
        </authorList>
    </citation>
    <scope>FUNCTION</scope>
</reference>
<protein>
    <recommendedName>
        <fullName evidence="1">Transcription termination/antitermination protein NusG</fullName>
    </recommendedName>
</protein>
<organism>
    <name type="scientific">Bacillus subtilis (strain 168)</name>
    <dbReference type="NCBI Taxonomy" id="224308"/>
    <lineage>
        <taxon>Bacteria</taxon>
        <taxon>Bacillati</taxon>
        <taxon>Bacillota</taxon>
        <taxon>Bacilli</taxon>
        <taxon>Bacillales</taxon>
        <taxon>Bacillaceae</taxon>
        <taxon>Bacillus</taxon>
    </lineage>
</organism>
<feature type="chain" id="PRO_0000113916" description="Transcription termination/antitermination protein NusG">
    <location>
        <begin position="1"/>
        <end position="177"/>
    </location>
</feature>
<feature type="domain" description="KOW" evidence="1">
    <location>
        <begin position="128"/>
        <end position="156"/>
    </location>
</feature>
<feature type="strand" evidence="4">
    <location>
        <begin position="4"/>
        <end position="10"/>
    </location>
</feature>
<feature type="helix" evidence="4">
    <location>
        <begin position="15"/>
        <end position="29"/>
    </location>
</feature>
<feature type="strand" evidence="4">
    <location>
        <begin position="33"/>
        <end position="39"/>
    </location>
</feature>
<feature type="strand" evidence="5">
    <location>
        <begin position="50"/>
        <end position="52"/>
    </location>
</feature>
<feature type="strand" evidence="4">
    <location>
        <begin position="64"/>
        <end position="69"/>
    </location>
</feature>
<feature type="strand" evidence="5">
    <location>
        <begin position="71"/>
        <end position="73"/>
    </location>
</feature>
<feature type="helix" evidence="4">
    <location>
        <begin position="75"/>
        <end position="80"/>
    </location>
</feature>
<feature type="strand" evidence="4">
    <location>
        <begin position="85"/>
        <end position="89"/>
    </location>
</feature>
<feature type="strand" evidence="6">
    <location>
        <begin position="92"/>
        <end position="94"/>
    </location>
</feature>
<feature type="helix" evidence="4">
    <location>
        <begin position="103"/>
        <end position="111"/>
    </location>
</feature>
<name>NUSG_BACSU</name>
<keyword id="KW-0002">3D-structure</keyword>
<keyword id="KW-1185">Reference proteome</keyword>
<keyword id="KW-0804">Transcription</keyword>
<keyword id="KW-0889">Transcription antitermination</keyword>
<keyword id="KW-0805">Transcription regulation</keyword>
<keyword id="KW-0806">Transcription termination</keyword>
<evidence type="ECO:0000255" key="1">
    <source>
        <dbReference type="HAMAP-Rule" id="MF_00948"/>
    </source>
</evidence>
<evidence type="ECO:0000269" key="2">
    <source>
    </source>
</evidence>
<evidence type="ECO:0000269" key="3">
    <source>
    </source>
</evidence>
<evidence type="ECO:0007829" key="4">
    <source>
        <dbReference type="PDB" id="8EHQ"/>
    </source>
</evidence>
<evidence type="ECO:0007829" key="5">
    <source>
        <dbReference type="PDB" id="8EJ3"/>
    </source>
</evidence>
<evidence type="ECO:0007829" key="6">
    <source>
        <dbReference type="PDB" id="8EOE"/>
    </source>
</evidence>
<sequence length="177" mass="20126">MEKNWYVVHTYSGYENKVKANLEKRVESMGMQDKIFRVVVPEEEETDIKNGKKKVVKKKVFPGYVLVEIVMTDDSWYVVRNTPGVTGFVGSAGSGSKPTPLLPGEAETILKRMGMDERKTDIDFELKETVKVIDGPFANFTGSIEEIDYDKSKVKVFVNMFGRETPVELEFTQIDKL</sequence>
<dbReference type="EMBL" id="D13303">
    <property type="protein sequence ID" value="BAA02560.1"/>
    <property type="molecule type" value="Genomic_DNA"/>
</dbReference>
<dbReference type="EMBL" id="AL009126">
    <property type="protein sequence ID" value="CAB11877.1"/>
    <property type="molecule type" value="Genomic_DNA"/>
</dbReference>
<dbReference type="PIR" id="S39859">
    <property type="entry name" value="S39859"/>
</dbReference>
<dbReference type="RefSeq" id="NP_387982.1">
    <property type="nucleotide sequence ID" value="NC_000964.3"/>
</dbReference>
<dbReference type="RefSeq" id="WP_003225764.1">
    <property type="nucleotide sequence ID" value="NZ_OZ025638.1"/>
</dbReference>
<dbReference type="PDB" id="8EHQ">
    <property type="method" value="EM"/>
    <property type="resolution" value="3.00 A"/>
    <property type="chains" value="G=1-177"/>
</dbReference>
<dbReference type="PDB" id="8EJ3">
    <property type="method" value="EM"/>
    <property type="resolution" value="3.13 A"/>
    <property type="chains" value="G=1-177"/>
</dbReference>
<dbReference type="PDB" id="8EOE">
    <property type="method" value="EM"/>
    <property type="resolution" value="3.20 A"/>
    <property type="chains" value="G=1-177"/>
</dbReference>
<dbReference type="PDB" id="8EOF">
    <property type="method" value="EM"/>
    <property type="resolution" value="3.30 A"/>
    <property type="chains" value="G=1-177"/>
</dbReference>
<dbReference type="PDB" id="8EXY">
    <property type="method" value="EM"/>
    <property type="resolution" value="3.20 A"/>
    <property type="chains" value="G=1-177"/>
</dbReference>
<dbReference type="PDBsum" id="8EHQ"/>
<dbReference type="PDBsum" id="8EJ3"/>
<dbReference type="PDBsum" id="8EOE"/>
<dbReference type="PDBsum" id="8EOF"/>
<dbReference type="PDBsum" id="8EXY"/>
<dbReference type="EMDB" id="EMD-28149"/>
<dbReference type="EMDB" id="EMD-28174"/>
<dbReference type="EMDB" id="EMD-28373"/>
<dbReference type="EMDB" id="EMD-28374"/>
<dbReference type="EMDB" id="EMD-28665"/>
<dbReference type="SMR" id="Q06795"/>
<dbReference type="FunCoup" id="Q06795">
    <property type="interactions" value="611"/>
</dbReference>
<dbReference type="STRING" id="224308.BSU01010"/>
<dbReference type="PaxDb" id="224308-BSU01010"/>
<dbReference type="EnsemblBacteria" id="CAB11877">
    <property type="protein sequence ID" value="CAB11877"/>
    <property type="gene ID" value="BSU_01010"/>
</dbReference>
<dbReference type="GeneID" id="86875501"/>
<dbReference type="GeneID" id="936851"/>
<dbReference type="KEGG" id="bsu:BSU01010"/>
<dbReference type="PATRIC" id="fig|224308.179.peg.104"/>
<dbReference type="eggNOG" id="COG0250">
    <property type="taxonomic scope" value="Bacteria"/>
</dbReference>
<dbReference type="InParanoid" id="Q06795"/>
<dbReference type="OrthoDB" id="9809075at2"/>
<dbReference type="PhylomeDB" id="Q06795"/>
<dbReference type="BioCyc" id="BSUB:BSU01010-MONOMER"/>
<dbReference type="PRO" id="PR:Q06795"/>
<dbReference type="Proteomes" id="UP000001570">
    <property type="component" value="Chromosome"/>
</dbReference>
<dbReference type="GO" id="GO:0005829">
    <property type="term" value="C:cytosol"/>
    <property type="evidence" value="ECO:0000318"/>
    <property type="project" value="GO_Central"/>
</dbReference>
<dbReference type="GO" id="GO:0006353">
    <property type="term" value="P:DNA-templated transcription termination"/>
    <property type="evidence" value="ECO:0007669"/>
    <property type="project" value="UniProtKB-UniRule"/>
</dbReference>
<dbReference type="GO" id="GO:0032784">
    <property type="term" value="P:regulation of DNA-templated transcription elongation"/>
    <property type="evidence" value="ECO:0007669"/>
    <property type="project" value="InterPro"/>
</dbReference>
<dbReference type="GO" id="GO:0031564">
    <property type="term" value="P:transcription antitermination"/>
    <property type="evidence" value="ECO:0007669"/>
    <property type="project" value="UniProtKB-UniRule"/>
</dbReference>
<dbReference type="GO" id="GO:0140673">
    <property type="term" value="P:transcription elongation-coupled chromatin remodeling"/>
    <property type="evidence" value="ECO:0007669"/>
    <property type="project" value="InterPro"/>
</dbReference>
<dbReference type="CDD" id="cd06091">
    <property type="entry name" value="KOW_NusG"/>
    <property type="match status" value="1"/>
</dbReference>
<dbReference type="CDD" id="cd09891">
    <property type="entry name" value="NGN_Bact_1"/>
    <property type="match status" value="1"/>
</dbReference>
<dbReference type="FunFam" id="2.30.30.30:FF:000002">
    <property type="entry name" value="Transcription termination/antitermination factor NusG"/>
    <property type="match status" value="1"/>
</dbReference>
<dbReference type="FunFam" id="3.30.70.940:FF:000002">
    <property type="entry name" value="Transcription termination/antitermination protein NusG"/>
    <property type="match status" value="1"/>
</dbReference>
<dbReference type="Gene3D" id="2.30.30.30">
    <property type="match status" value="1"/>
</dbReference>
<dbReference type="Gene3D" id="3.30.70.940">
    <property type="entry name" value="NusG, N-terminal domain"/>
    <property type="match status" value="1"/>
</dbReference>
<dbReference type="HAMAP" id="MF_00948">
    <property type="entry name" value="NusG"/>
    <property type="match status" value="1"/>
</dbReference>
<dbReference type="InterPro" id="IPR005824">
    <property type="entry name" value="KOW"/>
</dbReference>
<dbReference type="InterPro" id="IPR047050">
    <property type="entry name" value="NGN"/>
</dbReference>
<dbReference type="InterPro" id="IPR006645">
    <property type="entry name" value="NGN-like_dom"/>
</dbReference>
<dbReference type="InterPro" id="IPR036735">
    <property type="entry name" value="NGN_dom_sf"/>
</dbReference>
<dbReference type="InterPro" id="IPR043425">
    <property type="entry name" value="NusG-like"/>
</dbReference>
<dbReference type="InterPro" id="IPR014722">
    <property type="entry name" value="Rib_uL2_dom2"/>
</dbReference>
<dbReference type="InterPro" id="IPR001062">
    <property type="entry name" value="Transcrpt_antiterm_NusG"/>
</dbReference>
<dbReference type="InterPro" id="IPR015869">
    <property type="entry name" value="Transcrpt_antiterm_NusG_bac_CS"/>
</dbReference>
<dbReference type="InterPro" id="IPR008991">
    <property type="entry name" value="Translation_prot_SH3-like_sf"/>
</dbReference>
<dbReference type="NCBIfam" id="TIGR00922">
    <property type="entry name" value="nusG"/>
    <property type="match status" value="1"/>
</dbReference>
<dbReference type="PANTHER" id="PTHR30265">
    <property type="entry name" value="RHO-INTERACTING TRANSCRIPTION TERMINATION FACTOR NUSG"/>
    <property type="match status" value="1"/>
</dbReference>
<dbReference type="PANTHER" id="PTHR30265:SF2">
    <property type="entry name" value="TRANSCRIPTION TERMINATION_ANTITERMINATION PROTEIN NUSG"/>
    <property type="match status" value="1"/>
</dbReference>
<dbReference type="Pfam" id="PF00467">
    <property type="entry name" value="KOW"/>
    <property type="match status" value="1"/>
</dbReference>
<dbReference type="Pfam" id="PF02357">
    <property type="entry name" value="NusG"/>
    <property type="match status" value="1"/>
</dbReference>
<dbReference type="PRINTS" id="PR00338">
    <property type="entry name" value="NUSGTNSCPFCT"/>
</dbReference>
<dbReference type="SMART" id="SM00739">
    <property type="entry name" value="KOW"/>
    <property type="match status" value="1"/>
</dbReference>
<dbReference type="SMART" id="SM00738">
    <property type="entry name" value="NGN"/>
    <property type="match status" value="1"/>
</dbReference>
<dbReference type="SUPFAM" id="SSF82679">
    <property type="entry name" value="N-utilization substance G protein NusG, N-terminal domain"/>
    <property type="match status" value="1"/>
</dbReference>
<dbReference type="SUPFAM" id="SSF50104">
    <property type="entry name" value="Translation proteins SH3-like domain"/>
    <property type="match status" value="1"/>
</dbReference>
<dbReference type="PROSITE" id="PS01014">
    <property type="entry name" value="NUSG"/>
    <property type="match status" value="1"/>
</dbReference>
<comment type="function">
    <text evidence="1 2 3">Participates in transcription elongation, termination and antitermination. Stimulates RNA polymerase pausing at U107 and U144 in the trp leader. NusG-stimulated pausing is sequence specific. Does not affect trp leader termination.</text>
</comment>
<comment type="similarity">
    <text evidence="1">Belongs to the NusG family.</text>
</comment>
<proteinExistence type="evidence at protein level"/>
<gene>
    <name evidence="1" type="primary">nusG</name>
    <name type="ordered locus">BSU01010</name>
</gene>
<accession>Q06795</accession>